<sequence>MKELLYYTFIETEVTGAFLVFREKTQNLVFASLGNDKLFLLGKVEGFLKKHEKQDTMYDLQELKEAETYKKSIENYTICLENKMPLPSGAIPFEFLFGTDFQRKVWNELLNVEHGHVVTYGDIAKRIGKPTAARSVGRACGSNNLALLVPCHRIVGSNRKLTGYKWSCKLKEQLLNNEKENSLSLSRL</sequence>
<evidence type="ECO:0000250" key="1"/>
<evidence type="ECO:0000255" key="2">
    <source>
        <dbReference type="PROSITE-ProRule" id="PRU10017"/>
    </source>
</evidence>
<evidence type="ECO:0000269" key="3">
    <source>
    </source>
</evidence>
<evidence type="ECO:0000269" key="4">
    <source>
    </source>
</evidence>
<evidence type="ECO:0000269" key="5">
    <source>
    </source>
</evidence>
<evidence type="ECO:0000269" key="6">
    <source>
    </source>
</evidence>
<evidence type="ECO:0000305" key="7"/>
<accession>P26188</accession>
<accession>D6VRF4</accession>
<organism>
    <name type="scientific">Saccharomyces cerevisiae (strain ATCC 204508 / S288c)</name>
    <name type="common">Baker's yeast</name>
    <dbReference type="NCBI Taxonomy" id="559292"/>
    <lineage>
        <taxon>Eukaryota</taxon>
        <taxon>Fungi</taxon>
        <taxon>Dikarya</taxon>
        <taxon>Ascomycota</taxon>
        <taxon>Saccharomycotina</taxon>
        <taxon>Saccharomycetes</taxon>
        <taxon>Saccharomycetales</taxon>
        <taxon>Saccharomycetaceae</taxon>
        <taxon>Saccharomyces</taxon>
    </lineage>
</organism>
<name>MGMT_YEAST</name>
<protein>
    <recommendedName>
        <fullName>Methylated-DNA--protein-cysteine methyltransferase</fullName>
        <ecNumber evidence="3 4">2.1.1.63</ecNumber>
    </recommendedName>
    <alternativeName>
        <fullName>6-O-methylguanine-DNA methyltransferase</fullName>
        <shortName>MGMT</shortName>
    </alternativeName>
    <alternativeName>
        <fullName>DNA repair MTase</fullName>
    </alternativeName>
    <alternativeName>
        <fullName>O-6-methylguanine-DNA-alkyltransferase</fullName>
    </alternativeName>
</protein>
<feature type="chain" id="PRO_0000139362" description="Methylated-DNA--protein-cysteine methyltransferase">
    <location>
        <begin position="1"/>
        <end position="188"/>
    </location>
</feature>
<feature type="active site" description="Nucleophile; methyl group acceptor" evidence="2">
    <location>
        <position position="151"/>
    </location>
</feature>
<feature type="binding site" evidence="1">
    <location>
        <position position="120"/>
    </location>
    <ligand>
        <name>DNA</name>
        <dbReference type="ChEBI" id="CHEBI:16991"/>
    </ligand>
</feature>
<feature type="binding site" evidence="1">
    <location>
        <position position="121"/>
    </location>
    <ligand>
        <name>DNA</name>
        <dbReference type="ChEBI" id="CHEBI:16991"/>
    </ligand>
</feature>
<feature type="binding site" evidence="1">
    <location>
        <position position="134"/>
    </location>
    <ligand>
        <name>DNA</name>
        <dbReference type="ChEBI" id="CHEBI:16991"/>
    </ligand>
</feature>
<feature type="binding site" evidence="1">
    <location>
        <position position="157"/>
    </location>
    <ligand>
        <name>DNA</name>
        <dbReference type="ChEBI" id="CHEBI:16991"/>
    </ligand>
</feature>
<proteinExistence type="evidence at protein level"/>
<keyword id="KW-0227">DNA damage</keyword>
<keyword id="KW-0234">DNA repair</keyword>
<keyword id="KW-0238">DNA-binding</keyword>
<keyword id="KW-0489">Methyltransferase</keyword>
<keyword id="KW-0539">Nucleus</keyword>
<keyword id="KW-1185">Reference proteome</keyword>
<keyword id="KW-0808">Transferase</keyword>
<reference key="1">
    <citation type="journal article" date="1991" name="EMBO J.">
        <title>Primary sequence and biological functions of a Saccharomyces cerevisiae O6-methylguanine/O4-methylthymine DNA repair methyltransferase gene.</title>
        <authorList>
            <person name="Xiao W."/>
            <person name="Derfler B."/>
            <person name="Chen J."/>
            <person name="Samson L."/>
        </authorList>
    </citation>
    <scope>NUCLEOTIDE SEQUENCE [GENOMIC DNA]</scope>
    <scope>FUNCTION</scope>
    <scope>CATALYTIC ACTIVITY</scope>
</reference>
<reference key="2">
    <citation type="journal article" date="1992" name="Nucleic Acids Res.">
        <title>The Saccharomyces cerevisiae MGT1 DNA repair methyltransferase gene: its promoter and entire coding sequence, regulation and in vivo biological functions.</title>
        <authorList>
            <person name="Xiao W."/>
            <person name="Samson L."/>
        </authorList>
    </citation>
    <scope>NUCLEOTIDE SEQUENCE [GENOMIC DNA]</scope>
    <scope>SEQUENCE REVISION</scope>
    <source>
        <strain>ATCC 44774 / DBY747</strain>
    </source>
</reference>
<reference key="3">
    <citation type="journal article" date="1997" name="Yeast">
        <title>The nucleotide sequence of a 39 kb segment of yeast chromosome IV: 12 new open reading frames, nine known genes and one gene for Gly-tRNA.</title>
        <authorList>
            <person name="Bahr A."/>
            <person name="Moeller-Rieker S."/>
            <person name="Hankeln T."/>
            <person name="Kraemer C."/>
            <person name="Protin U."/>
            <person name="Schmidt E.R."/>
        </authorList>
    </citation>
    <scope>NUCLEOTIDE SEQUENCE [GENOMIC DNA]</scope>
    <source>
        <strain>ATCC 96604 / S288c / FY1679</strain>
    </source>
</reference>
<reference key="4">
    <citation type="journal article" date="1997" name="Nature">
        <title>The nucleotide sequence of Saccharomyces cerevisiae chromosome IV.</title>
        <authorList>
            <person name="Jacq C."/>
            <person name="Alt-Moerbe J."/>
            <person name="Andre B."/>
            <person name="Arnold W."/>
            <person name="Bahr A."/>
            <person name="Ballesta J.P.G."/>
            <person name="Bargues M."/>
            <person name="Baron L."/>
            <person name="Becker A."/>
            <person name="Biteau N."/>
            <person name="Bloecker H."/>
            <person name="Blugeon C."/>
            <person name="Boskovic J."/>
            <person name="Brandt P."/>
            <person name="Brueckner M."/>
            <person name="Buitrago M.J."/>
            <person name="Coster F."/>
            <person name="Delaveau T."/>
            <person name="del Rey F."/>
            <person name="Dujon B."/>
            <person name="Eide L.G."/>
            <person name="Garcia-Cantalejo J.M."/>
            <person name="Goffeau A."/>
            <person name="Gomez-Peris A."/>
            <person name="Granotier C."/>
            <person name="Hanemann V."/>
            <person name="Hankeln T."/>
            <person name="Hoheisel J.D."/>
            <person name="Jaeger W."/>
            <person name="Jimenez A."/>
            <person name="Jonniaux J.-L."/>
            <person name="Kraemer C."/>
            <person name="Kuester H."/>
            <person name="Laamanen P."/>
            <person name="Legros Y."/>
            <person name="Louis E.J."/>
            <person name="Moeller-Rieker S."/>
            <person name="Monnet A."/>
            <person name="Moro M."/>
            <person name="Mueller-Auer S."/>
            <person name="Nussbaumer B."/>
            <person name="Paricio N."/>
            <person name="Paulin L."/>
            <person name="Perea J."/>
            <person name="Perez-Alonso M."/>
            <person name="Perez-Ortin J.E."/>
            <person name="Pohl T.M."/>
            <person name="Prydz H."/>
            <person name="Purnelle B."/>
            <person name="Rasmussen S.W."/>
            <person name="Remacha M.A."/>
            <person name="Revuelta J.L."/>
            <person name="Rieger M."/>
            <person name="Salom D."/>
            <person name="Saluz H.P."/>
            <person name="Saiz J.E."/>
            <person name="Saren A.-M."/>
            <person name="Schaefer M."/>
            <person name="Scharfe M."/>
            <person name="Schmidt E.R."/>
            <person name="Schneider C."/>
            <person name="Scholler P."/>
            <person name="Schwarz S."/>
            <person name="Soler-Mira A."/>
            <person name="Urrestarazu L.A."/>
            <person name="Verhasselt P."/>
            <person name="Vissers S."/>
            <person name="Voet M."/>
            <person name="Volckaert G."/>
            <person name="Wagner G."/>
            <person name="Wambutt R."/>
            <person name="Wedler E."/>
            <person name="Wedler H."/>
            <person name="Woelfl S."/>
            <person name="Harris D.E."/>
            <person name="Bowman S."/>
            <person name="Brown D."/>
            <person name="Churcher C.M."/>
            <person name="Connor R."/>
            <person name="Dedman K."/>
            <person name="Gentles S."/>
            <person name="Hamlin N."/>
            <person name="Hunt S."/>
            <person name="Jones L."/>
            <person name="McDonald S."/>
            <person name="Murphy L.D."/>
            <person name="Niblett D."/>
            <person name="Odell C."/>
            <person name="Oliver K."/>
            <person name="Rajandream M.A."/>
            <person name="Richards C."/>
            <person name="Shore L."/>
            <person name="Walsh S.V."/>
            <person name="Barrell B.G."/>
            <person name="Dietrich F.S."/>
            <person name="Mulligan J.T."/>
            <person name="Allen E."/>
            <person name="Araujo R."/>
            <person name="Aviles E."/>
            <person name="Berno A."/>
            <person name="Carpenter J."/>
            <person name="Chen E."/>
            <person name="Cherry J.M."/>
            <person name="Chung E."/>
            <person name="Duncan M."/>
            <person name="Hunicke-Smith S."/>
            <person name="Hyman R.W."/>
            <person name="Komp C."/>
            <person name="Lashkari D."/>
            <person name="Lew H."/>
            <person name="Lin D."/>
            <person name="Mosedale D."/>
            <person name="Nakahara K."/>
            <person name="Namath A."/>
            <person name="Oefner P."/>
            <person name="Oh C."/>
            <person name="Petel F.X."/>
            <person name="Roberts D."/>
            <person name="Schramm S."/>
            <person name="Schroeder M."/>
            <person name="Shogren T."/>
            <person name="Shroff N."/>
            <person name="Winant A."/>
            <person name="Yelton M.A."/>
            <person name="Botstein D."/>
            <person name="Davis R.W."/>
            <person name="Johnston M."/>
            <person name="Andrews S."/>
            <person name="Brinkman R."/>
            <person name="Cooper J."/>
            <person name="Ding H."/>
            <person name="Du Z."/>
            <person name="Favello A."/>
            <person name="Fulton L."/>
            <person name="Gattung S."/>
            <person name="Greco T."/>
            <person name="Hallsworth K."/>
            <person name="Hawkins J."/>
            <person name="Hillier L.W."/>
            <person name="Jier M."/>
            <person name="Johnson D."/>
            <person name="Johnston L."/>
            <person name="Kirsten J."/>
            <person name="Kucaba T."/>
            <person name="Langston Y."/>
            <person name="Latreille P."/>
            <person name="Le T."/>
            <person name="Mardis E."/>
            <person name="Menezes S."/>
            <person name="Miller N."/>
            <person name="Nhan M."/>
            <person name="Pauley A."/>
            <person name="Peluso D."/>
            <person name="Rifkin L."/>
            <person name="Riles L."/>
            <person name="Taich A."/>
            <person name="Trevaskis E."/>
            <person name="Vignati D."/>
            <person name="Wilcox L."/>
            <person name="Wohldman P."/>
            <person name="Vaudin M."/>
            <person name="Wilson R."/>
            <person name="Waterston R."/>
            <person name="Albermann K."/>
            <person name="Hani J."/>
            <person name="Heumann K."/>
            <person name="Kleine K."/>
            <person name="Mewes H.-W."/>
            <person name="Zollner A."/>
            <person name="Zaccaria P."/>
        </authorList>
    </citation>
    <scope>NUCLEOTIDE SEQUENCE [LARGE SCALE GENOMIC DNA]</scope>
    <source>
        <strain>ATCC 204508 / S288c</strain>
    </source>
</reference>
<reference key="5">
    <citation type="journal article" date="2014" name="G3 (Bethesda)">
        <title>The reference genome sequence of Saccharomyces cerevisiae: Then and now.</title>
        <authorList>
            <person name="Engel S.R."/>
            <person name="Dietrich F.S."/>
            <person name="Fisk D.G."/>
            <person name="Binkley G."/>
            <person name="Balakrishnan R."/>
            <person name="Costanzo M.C."/>
            <person name="Dwight S.S."/>
            <person name="Hitz B.C."/>
            <person name="Karra K."/>
            <person name="Nash R.S."/>
            <person name="Weng S."/>
            <person name="Wong E.D."/>
            <person name="Lloyd P."/>
            <person name="Skrzypek M.S."/>
            <person name="Miyasato S.R."/>
            <person name="Simison M."/>
            <person name="Cherry J.M."/>
        </authorList>
    </citation>
    <scope>GENOME REANNOTATION</scope>
    <source>
        <strain>ATCC 204508 / S288c</strain>
    </source>
</reference>
<reference key="6">
    <citation type="journal article" date="1996" name="Yeast">
        <title>The sequence of 23 kb surrounding the SNF3 locus on the left arm of yeast chromosome IV reveals the location of five known genes and characterizes at least six new open reading frames including putative genes for ribosomal protein L35 and a sugar transport protein.</title>
        <authorList>
            <person name="Verhasselt P."/>
            <person name="Voet M."/>
            <person name="Mathys J."/>
            <person name="Volckaert G."/>
        </authorList>
    </citation>
    <scope>NUCLEOTIDE SEQUENCE [GENOMIC DNA] OF 1-135</scope>
    <source>
        <strain>ATCC 96604 / S288c / FY1679</strain>
    </source>
</reference>
<reference key="7">
    <citation type="journal article" date="1990" name="J. Biol. Chem.">
        <title>Identification and preliminary characterization of an O6-methylguanine DNA repair methyltransferase in the yeast Saccharomyces cerevisiae.</title>
        <authorList>
            <person name="Sassanfar M."/>
            <person name="Samson L."/>
        </authorList>
    </citation>
    <scope>FUNCTION</scope>
    <scope>CHARACTERIZATION</scope>
    <scope>LEVEL OF PROTEIN EXPRESSION</scope>
</reference>
<reference key="8">
    <citation type="journal article" date="1991" name="J. Biol. Chem.">
        <title>Relative efficiencies of the bacterial, yeast, and human DNA methyltransferases for the repair of O6-methylguanine and O4-methylthymine.</title>
        <authorList>
            <person name="Sassanfar M."/>
            <person name="Dosanjh M.K."/>
            <person name="Essigmann J.M."/>
            <person name="Samson L."/>
        </authorList>
    </citation>
    <scope>FUNCTION</scope>
    <scope>CATALYTIC ACTIVITY</scope>
</reference>
<reference key="9">
    <citation type="journal article" date="1995" name="Cell. Mol. Biol.">
        <title>Expression of yeast O6-methylguanine-DNA methyltransferase (MGMT) gene.</title>
        <authorList>
            <person name="Joo J.H."/>
            <person name="Rho J.K."/>
            <person name="Kim J.H."/>
            <person name="Kim W.J."/>
            <person name="Choe S.Y."/>
            <person name="Park S.D."/>
        </authorList>
    </citation>
    <scope>INDUCTION</scope>
</reference>
<reference key="10">
    <citation type="journal article" date="2003" name="Nature">
        <title>Sequencing and comparison of yeast species to identify genes and regulatory elements.</title>
        <authorList>
            <person name="Kellis M."/>
            <person name="Patterson N."/>
            <person name="Endrizzi M."/>
            <person name="Birren B.W."/>
            <person name="Lander E.S."/>
        </authorList>
    </citation>
    <scope>IDENTIFICATION OF PROBABLE INITIATION SITE</scope>
</reference>
<reference key="11">
    <citation type="journal article" date="2003" name="Science">
        <title>Finding functional features in Saccharomyces genomes by phylogenetic footprinting.</title>
        <authorList>
            <person name="Cliften P.F."/>
            <person name="Sudarsanam P."/>
            <person name="Desikan A."/>
            <person name="Fulton L."/>
            <person name="Fulton B."/>
            <person name="Majors J."/>
            <person name="Waterston R."/>
            <person name="Cohen B.A."/>
            <person name="Johnston M."/>
        </authorList>
    </citation>
    <scope>IDENTIFICATION OF PROBABLE INITIATION SITE</scope>
</reference>
<comment type="function">
    <text evidence="3 4 5">Involved in the cellular defense against the biological effects of O6-methylguanine (O6-MeG) and O4-methylthymine (O4-MeT) in DNA. Repairs the methylated nucleobase in DNA by stoichiometrically transferring the methyl group to a cysteine residue in the enzyme. This is a suicide reaction: the enzyme is irreversibly inactivated. Prefers double-stranded DNA over single-stranded DNA as substrate.</text>
</comment>
<comment type="catalytic activity">
    <reaction evidence="2 3 4">
        <text>a 6-O-methyl-2'-deoxyguanosine in DNA + L-cysteinyl-[protein] = S-methyl-L-cysteinyl-[protein] + a 2'-deoxyguanosine in DNA</text>
        <dbReference type="Rhea" id="RHEA:24000"/>
        <dbReference type="Rhea" id="RHEA-COMP:10131"/>
        <dbReference type="Rhea" id="RHEA-COMP:10132"/>
        <dbReference type="Rhea" id="RHEA-COMP:11367"/>
        <dbReference type="Rhea" id="RHEA-COMP:11368"/>
        <dbReference type="ChEBI" id="CHEBI:29950"/>
        <dbReference type="ChEBI" id="CHEBI:82612"/>
        <dbReference type="ChEBI" id="CHEBI:85445"/>
        <dbReference type="ChEBI" id="CHEBI:85448"/>
        <dbReference type="EC" id="2.1.1.63"/>
    </reaction>
</comment>
<comment type="catalytic activity">
    <reaction evidence="2 3 4">
        <text>a 4-O-methyl-thymidine in DNA + L-cysteinyl-[protein] = a thymidine in DNA + S-methyl-L-cysteinyl-[protein]</text>
        <dbReference type="Rhea" id="RHEA:53428"/>
        <dbReference type="Rhea" id="RHEA-COMP:10131"/>
        <dbReference type="Rhea" id="RHEA-COMP:10132"/>
        <dbReference type="Rhea" id="RHEA-COMP:13555"/>
        <dbReference type="Rhea" id="RHEA-COMP:13556"/>
        <dbReference type="ChEBI" id="CHEBI:29950"/>
        <dbReference type="ChEBI" id="CHEBI:82612"/>
        <dbReference type="ChEBI" id="CHEBI:137386"/>
        <dbReference type="ChEBI" id="CHEBI:137387"/>
        <dbReference type="EC" id="2.1.1.63"/>
    </reaction>
</comment>
<comment type="interaction">
    <interactant intactId="EBI-10873">
        <id>P26188</id>
    </interactant>
    <interactant intactId="EBI-6194">
        <id>P39009</id>
        <label>DUN1</label>
    </interactant>
    <organismsDiffer>false</organismsDiffer>
    <experiments>2</experiments>
</comment>
<comment type="interaction">
    <interactant intactId="EBI-10873">
        <id>P26188</id>
    </interactant>
    <interactant intactId="EBI-19909">
        <id>P19812</id>
        <label>UBR1</label>
    </interactant>
    <organismsDiffer>false</organismsDiffer>
    <experiments>2</experiments>
</comment>
<comment type="interaction">
    <interactant intactId="EBI-10873">
        <id>P26188</id>
    </interactant>
    <interactant intactId="EBI-20010">
        <id>P33202</id>
        <label>UFD4</label>
    </interactant>
    <organismsDiffer>false</organismsDiffer>
    <experiments>2</experiments>
</comment>
<comment type="subcellular location">
    <subcellularLocation>
        <location>Nucleus</location>
    </subcellularLocation>
</comment>
<comment type="induction">
    <text evidence="6">In contrast to some bacterial and mammalian enzymes, MGT1 is not induced by alkylating agents.</text>
</comment>
<comment type="miscellaneous">
    <text evidence="5">Present with 150 molecules/cell in log phase YPD medium, but not detectable in stationary phase cells.</text>
</comment>
<comment type="miscellaneous">
    <text>This enzyme catalyzes only one turnover and therefore is not strictly catalytic. According to one definition, an enzyme is a biocatalyst that acts repeatedly and over many reaction cycles.</text>
</comment>
<comment type="similarity">
    <text evidence="7">Belongs to the MGMT family.</text>
</comment>
<comment type="sequence caution" evidence="7">
    <conflict type="erroneous initiation">
        <sequence resource="EMBL-CDS" id="AAA34780"/>
    </conflict>
</comment>
<comment type="sequence caution" evidence="7">
    <conflict type="erroneous initiation">
        <sequence resource="EMBL-CDS" id="CAA42920"/>
    </conflict>
</comment>
<comment type="sequence caution" evidence="7">
    <conflict type="erroneous initiation">
        <sequence resource="EMBL-CDS" id="CAA67469"/>
    </conflict>
</comment>
<comment type="sequence caution" evidence="7">
    <conflict type="erroneous initiation">
        <sequence resource="EMBL-CDS" id="CAA98777"/>
    </conflict>
</comment>
<comment type="sequence caution" evidence="7">
    <conflict type="erroneous initiation">
        <sequence resource="EMBL-CDS" id="CAA98778"/>
    </conflict>
</comment>
<dbReference type="EC" id="2.1.1.63" evidence="3 4"/>
<dbReference type="EMBL" id="X60368">
    <property type="protein sequence ID" value="CAA42920.1"/>
    <property type="status" value="ALT_INIT"/>
    <property type="molecule type" value="Genomic_DNA"/>
</dbReference>
<dbReference type="EMBL" id="M94227">
    <property type="protein sequence ID" value="AAA34780.1"/>
    <property type="status" value="ALT_INIT"/>
    <property type="molecule type" value="Genomic_DNA"/>
</dbReference>
<dbReference type="EMBL" id="X99000">
    <property type="protein sequence ID" value="CAA67469.1"/>
    <property type="status" value="ALT_INIT"/>
    <property type="molecule type" value="Genomic_DNA"/>
</dbReference>
<dbReference type="EMBL" id="Z74248">
    <property type="protein sequence ID" value="CAA98778.1"/>
    <property type="status" value="ALT_INIT"/>
    <property type="molecule type" value="Genomic_DNA"/>
</dbReference>
<dbReference type="EMBL" id="Z74247">
    <property type="protein sequence ID" value="CAA98777.1"/>
    <property type="status" value="ALT_INIT"/>
    <property type="molecule type" value="Genomic_DNA"/>
</dbReference>
<dbReference type="EMBL" id="X83276">
    <property type="protein sequence ID" value="CAA58247.1"/>
    <property type="molecule type" value="Genomic_DNA"/>
</dbReference>
<dbReference type="EMBL" id="BK006938">
    <property type="protein sequence ID" value="DAA11664.1"/>
    <property type="molecule type" value="Genomic_DNA"/>
</dbReference>
<dbReference type="PIR" id="S29370">
    <property type="entry name" value="XUBYMC"/>
</dbReference>
<dbReference type="RefSeq" id="NP_010081.2">
    <property type="nucleotide sequence ID" value="NM_001180260.1"/>
</dbReference>
<dbReference type="SMR" id="P26188"/>
<dbReference type="BioGRID" id="31846">
    <property type="interactions" value="170"/>
</dbReference>
<dbReference type="DIP" id="DIP-7461N"/>
<dbReference type="FunCoup" id="P26188">
    <property type="interactions" value="68"/>
</dbReference>
<dbReference type="IntAct" id="P26188">
    <property type="interactions" value="51"/>
</dbReference>
<dbReference type="STRING" id="4932.YDL200C"/>
<dbReference type="PaxDb" id="4932-YDL200C"/>
<dbReference type="PeptideAtlas" id="P26188"/>
<dbReference type="EnsemblFungi" id="YDL200C_mRNA">
    <property type="protein sequence ID" value="YDL200C"/>
    <property type="gene ID" value="YDL200C"/>
</dbReference>
<dbReference type="GeneID" id="851327"/>
<dbReference type="KEGG" id="sce:YDL200C"/>
<dbReference type="AGR" id="SGD:S000002359"/>
<dbReference type="SGD" id="S000002359">
    <property type="gene designation" value="MGT1"/>
</dbReference>
<dbReference type="VEuPathDB" id="FungiDB:YDL200C"/>
<dbReference type="eggNOG" id="KOG4062">
    <property type="taxonomic scope" value="Eukaryota"/>
</dbReference>
<dbReference type="GeneTree" id="ENSGT00390000015799"/>
<dbReference type="HOGENOM" id="CLU_000445_52_2_1"/>
<dbReference type="InParanoid" id="P26188"/>
<dbReference type="OMA" id="YTFIETE"/>
<dbReference type="OrthoDB" id="1907495at2759"/>
<dbReference type="BioCyc" id="YEAST:G3O-29584-MONOMER"/>
<dbReference type="BioGRID-ORCS" id="851327">
    <property type="hits" value="0 hits in 10 CRISPR screens"/>
</dbReference>
<dbReference type="PRO" id="PR:P26188"/>
<dbReference type="Proteomes" id="UP000002311">
    <property type="component" value="Chromosome IV"/>
</dbReference>
<dbReference type="RNAct" id="P26188">
    <property type="molecule type" value="protein"/>
</dbReference>
<dbReference type="GO" id="GO:0005634">
    <property type="term" value="C:nucleus"/>
    <property type="evidence" value="ECO:0007669"/>
    <property type="project" value="UniProtKB-SubCell"/>
</dbReference>
<dbReference type="GO" id="GO:0005777">
    <property type="term" value="C:peroxisome"/>
    <property type="evidence" value="ECO:0007005"/>
    <property type="project" value="SGD"/>
</dbReference>
<dbReference type="GO" id="GO:0003677">
    <property type="term" value="F:DNA binding"/>
    <property type="evidence" value="ECO:0007669"/>
    <property type="project" value="UniProtKB-KW"/>
</dbReference>
<dbReference type="GO" id="GO:0003908">
    <property type="term" value="F:methylated-DNA-[protein]-cysteine S-methyltransferase activity"/>
    <property type="evidence" value="ECO:0000314"/>
    <property type="project" value="SGD"/>
</dbReference>
<dbReference type="GO" id="GO:0006307">
    <property type="term" value="P:DNA alkylation repair"/>
    <property type="evidence" value="ECO:0000315"/>
    <property type="project" value="SGD"/>
</dbReference>
<dbReference type="GO" id="GO:0032259">
    <property type="term" value="P:methylation"/>
    <property type="evidence" value="ECO:0007669"/>
    <property type="project" value="UniProtKB-KW"/>
</dbReference>
<dbReference type="CDD" id="cd06445">
    <property type="entry name" value="ATase"/>
    <property type="match status" value="1"/>
</dbReference>
<dbReference type="FunFam" id="1.10.10.10:FF:000214">
    <property type="entry name" value="Methylated-DNA--protein-cysteine methyltransferase"/>
    <property type="match status" value="1"/>
</dbReference>
<dbReference type="Gene3D" id="1.10.10.10">
    <property type="entry name" value="Winged helix-like DNA-binding domain superfamily/Winged helix DNA-binding domain"/>
    <property type="match status" value="1"/>
</dbReference>
<dbReference type="InterPro" id="IPR001497">
    <property type="entry name" value="MethylDNA_cys_MeTrfase_AS"/>
</dbReference>
<dbReference type="InterPro" id="IPR014048">
    <property type="entry name" value="MethylDNA_cys_MeTrfase_DNA-bd"/>
</dbReference>
<dbReference type="InterPro" id="IPR036217">
    <property type="entry name" value="MethylDNA_cys_MeTrfase_DNAb"/>
</dbReference>
<dbReference type="InterPro" id="IPR036388">
    <property type="entry name" value="WH-like_DNA-bd_sf"/>
</dbReference>
<dbReference type="NCBIfam" id="TIGR00589">
    <property type="entry name" value="ogt"/>
    <property type="match status" value="1"/>
</dbReference>
<dbReference type="PANTHER" id="PTHR10815">
    <property type="entry name" value="METHYLATED-DNA--PROTEIN-CYSTEINE METHYLTRANSFERASE"/>
    <property type="match status" value="1"/>
</dbReference>
<dbReference type="PANTHER" id="PTHR10815:SF13">
    <property type="entry name" value="METHYLATED-DNA--PROTEIN-CYSTEINE METHYLTRANSFERASE"/>
    <property type="match status" value="1"/>
</dbReference>
<dbReference type="Pfam" id="PF01035">
    <property type="entry name" value="DNA_binding_1"/>
    <property type="match status" value="1"/>
</dbReference>
<dbReference type="SUPFAM" id="SSF46767">
    <property type="entry name" value="Methylated DNA-protein cysteine methyltransferase, C-terminal domain"/>
    <property type="match status" value="1"/>
</dbReference>
<dbReference type="PROSITE" id="PS00374">
    <property type="entry name" value="MGMT"/>
    <property type="match status" value="1"/>
</dbReference>
<gene>
    <name type="primary">MGT1</name>
    <name type="ordered locus">YDL200C</name>
    <name type="ORF">D1204</name>
</gene>